<dbReference type="EMBL" id="AY323927">
    <property type="protein sequence ID" value="AAQ87663.1"/>
    <property type="molecule type" value="mRNA"/>
</dbReference>
<dbReference type="SMR" id="Q5J907"/>
<dbReference type="FunCoup" id="Q5J907">
    <property type="interactions" value="2962"/>
</dbReference>
<dbReference type="InParanoid" id="Q5J907"/>
<dbReference type="Proteomes" id="UP000504607">
    <property type="component" value="Unplaced"/>
</dbReference>
<dbReference type="GO" id="GO:0005737">
    <property type="term" value="C:cytoplasm"/>
    <property type="evidence" value="ECO:0007669"/>
    <property type="project" value="UniProtKB-SubCell"/>
</dbReference>
<dbReference type="GO" id="GO:0005509">
    <property type="term" value="F:calcium ion binding"/>
    <property type="evidence" value="ECO:0007669"/>
    <property type="project" value="TreeGrafter"/>
</dbReference>
<dbReference type="FunFam" id="2.170.150.10:FF:000003">
    <property type="entry name" value="Translationally-controlled tumor protein homolog"/>
    <property type="match status" value="1"/>
</dbReference>
<dbReference type="Gene3D" id="2.170.150.10">
    <property type="entry name" value="Metal Binding Protein, Guanine Nucleotide Exchange Factor, Chain A"/>
    <property type="match status" value="1"/>
</dbReference>
<dbReference type="InterPro" id="IPR011057">
    <property type="entry name" value="Mss4-like_sf"/>
</dbReference>
<dbReference type="InterPro" id="IPR011323">
    <property type="entry name" value="Mss4/transl-control_tumour"/>
</dbReference>
<dbReference type="InterPro" id="IPR034737">
    <property type="entry name" value="TCTP"/>
</dbReference>
<dbReference type="InterPro" id="IPR018103">
    <property type="entry name" value="Translation_control_tumour_CS"/>
</dbReference>
<dbReference type="InterPro" id="IPR018105">
    <property type="entry name" value="Translational_control_tumour_p"/>
</dbReference>
<dbReference type="PANTHER" id="PTHR11991:SF17">
    <property type="entry name" value="TRANSLATIONALLY CONTROLLED TUMOR PROTEIN 2"/>
    <property type="match status" value="1"/>
</dbReference>
<dbReference type="PANTHER" id="PTHR11991">
    <property type="entry name" value="TRANSLATIONALLY CONTROLLED TUMOR PROTEIN-RELATED"/>
    <property type="match status" value="1"/>
</dbReference>
<dbReference type="Pfam" id="PF00838">
    <property type="entry name" value="TCTP"/>
    <property type="match status" value="1"/>
</dbReference>
<dbReference type="PRINTS" id="PR01653">
    <property type="entry name" value="TCTPROTEIN"/>
</dbReference>
<dbReference type="SUPFAM" id="SSF51316">
    <property type="entry name" value="Mss4-like"/>
    <property type="match status" value="1"/>
</dbReference>
<dbReference type="PROSITE" id="PS01002">
    <property type="entry name" value="TCTP_1"/>
    <property type="match status" value="1"/>
</dbReference>
<dbReference type="PROSITE" id="PS01003">
    <property type="entry name" value="TCTP_2"/>
    <property type="match status" value="1"/>
</dbReference>
<dbReference type="PROSITE" id="PS51797">
    <property type="entry name" value="TCTP_3"/>
    <property type="match status" value="1"/>
</dbReference>
<organism>
    <name type="scientific">Elaeis guineensis var. tenera</name>
    <name type="common">Oil palm</name>
    <dbReference type="NCBI Taxonomy" id="51953"/>
    <lineage>
        <taxon>Eukaryota</taxon>
        <taxon>Viridiplantae</taxon>
        <taxon>Streptophyta</taxon>
        <taxon>Embryophyta</taxon>
        <taxon>Tracheophyta</taxon>
        <taxon>Spermatophyta</taxon>
        <taxon>Magnoliopsida</taxon>
        <taxon>Liliopsida</taxon>
        <taxon>Arecaceae</taxon>
        <taxon>Arecoideae</taxon>
        <taxon>Cocoseae</taxon>
        <taxon>Elaeidinae</taxon>
        <taxon>Elaeis</taxon>
    </lineage>
</organism>
<protein>
    <recommendedName>
        <fullName>Translationally-controlled tumor protein homolog</fullName>
        <shortName>TCTP</shortName>
    </recommendedName>
</protein>
<keyword id="KW-0106">Calcium</keyword>
<keyword id="KW-0963">Cytoplasm</keyword>
<keyword id="KW-1185">Reference proteome</keyword>
<comment type="function">
    <text evidence="1">Involved in calcium binding and microtubule stabilization.</text>
</comment>
<comment type="subcellular location">
    <subcellularLocation>
        <location evidence="1">Cytoplasm</location>
    </subcellularLocation>
</comment>
<comment type="similarity">
    <text evidence="2">Belongs to the TCTP family.</text>
</comment>
<evidence type="ECO:0000250" key="1"/>
<evidence type="ECO:0000255" key="2">
    <source>
        <dbReference type="PROSITE-ProRule" id="PRU01133"/>
    </source>
</evidence>
<proteinExistence type="evidence at transcript level"/>
<reference key="1">
    <citation type="submission" date="2004-12" db="EMBL/GenBank/DDBJ databases">
        <title>Cloning and expression of oil palm TCTP in Escherichia coli.</title>
        <authorList>
            <person name="Nugkeaw A."/>
            <person name="Chotigeat W."/>
            <person name="Phongdara A."/>
        </authorList>
    </citation>
    <scope>NUCLEOTIDE SEQUENCE [MRNA]</scope>
    <source>
        <tissue>Mesocarp</tissue>
    </source>
</reference>
<feature type="chain" id="PRO_0000252313" description="Translationally-controlled tumor protein homolog">
    <location>
        <begin position="1"/>
        <end position="168"/>
    </location>
</feature>
<feature type="domain" description="TCTP" evidence="2">
    <location>
        <begin position="1"/>
        <end position="168"/>
    </location>
</feature>
<name>TCTP_ELAGV</name>
<accession>Q5J907</accession>
<gene>
    <name type="primary">TCTP</name>
</gene>
<sequence>MLVYQDLLTGDELLSDSFPYKEIHNGMLWEVEGKWVIQGAVNVDIGANPSAEGGEEDEGVDDQAVKVVDIVDTFRLQEQPAFDKKQFVTFMKRYIKNLTPKLDAEKQELFKKHIEGATKFLLSKLSDLQFFVGESMHDDGCLVFAYYKDGATDPTFLYFAYGLKEIKC</sequence>